<name>RODZ_YERPE</name>
<reference key="1">
    <citation type="journal article" date="2001" name="Nature">
        <title>Genome sequence of Yersinia pestis, the causative agent of plague.</title>
        <authorList>
            <person name="Parkhill J."/>
            <person name="Wren B.W."/>
            <person name="Thomson N.R."/>
            <person name="Titball R.W."/>
            <person name="Holden M.T.G."/>
            <person name="Prentice M.B."/>
            <person name="Sebaihia M."/>
            <person name="James K.D."/>
            <person name="Churcher C.M."/>
            <person name="Mungall K.L."/>
            <person name="Baker S."/>
            <person name="Basham D."/>
            <person name="Bentley S.D."/>
            <person name="Brooks K."/>
            <person name="Cerdeno-Tarraga A.-M."/>
            <person name="Chillingworth T."/>
            <person name="Cronin A."/>
            <person name="Davies R.M."/>
            <person name="Davis P."/>
            <person name="Dougan G."/>
            <person name="Feltwell T."/>
            <person name="Hamlin N."/>
            <person name="Holroyd S."/>
            <person name="Jagels K."/>
            <person name="Karlyshev A.V."/>
            <person name="Leather S."/>
            <person name="Moule S."/>
            <person name="Oyston P.C.F."/>
            <person name="Quail M.A."/>
            <person name="Rutherford K.M."/>
            <person name="Simmonds M."/>
            <person name="Skelton J."/>
            <person name="Stevens K."/>
            <person name="Whitehead S."/>
            <person name="Barrell B.G."/>
        </authorList>
    </citation>
    <scope>NUCLEOTIDE SEQUENCE [LARGE SCALE GENOMIC DNA]</scope>
    <source>
        <strain>CO-92 / Biovar Orientalis</strain>
    </source>
</reference>
<reference key="2">
    <citation type="journal article" date="2002" name="J. Bacteriol.">
        <title>Genome sequence of Yersinia pestis KIM.</title>
        <authorList>
            <person name="Deng W."/>
            <person name="Burland V."/>
            <person name="Plunkett G. III"/>
            <person name="Boutin A."/>
            <person name="Mayhew G.F."/>
            <person name="Liss P."/>
            <person name="Perna N.T."/>
            <person name="Rose D.J."/>
            <person name="Mau B."/>
            <person name="Zhou S."/>
            <person name="Schwartz D.C."/>
            <person name="Fetherston J.D."/>
            <person name="Lindler L.E."/>
            <person name="Brubaker R.R."/>
            <person name="Plano G.V."/>
            <person name="Straley S.C."/>
            <person name="McDonough K.A."/>
            <person name="Nilles M.L."/>
            <person name="Matson J.S."/>
            <person name="Blattner F.R."/>
            <person name="Perry R.D."/>
        </authorList>
    </citation>
    <scope>NUCLEOTIDE SEQUENCE [LARGE SCALE GENOMIC DNA]</scope>
    <source>
        <strain>KIM10+ / Biovar Mediaevalis</strain>
    </source>
</reference>
<reference key="3">
    <citation type="journal article" date="2004" name="DNA Res.">
        <title>Complete genome sequence of Yersinia pestis strain 91001, an isolate avirulent to humans.</title>
        <authorList>
            <person name="Song Y."/>
            <person name="Tong Z."/>
            <person name="Wang J."/>
            <person name="Wang L."/>
            <person name="Guo Z."/>
            <person name="Han Y."/>
            <person name="Zhang J."/>
            <person name="Pei D."/>
            <person name="Zhou D."/>
            <person name="Qin H."/>
            <person name="Pang X."/>
            <person name="Han Y."/>
            <person name="Zhai J."/>
            <person name="Li M."/>
            <person name="Cui B."/>
            <person name="Qi Z."/>
            <person name="Jin L."/>
            <person name="Dai R."/>
            <person name="Chen F."/>
            <person name="Li S."/>
            <person name="Ye C."/>
            <person name="Du Z."/>
            <person name="Lin W."/>
            <person name="Wang J."/>
            <person name="Yu J."/>
            <person name="Yang H."/>
            <person name="Wang J."/>
            <person name="Huang P."/>
            <person name="Yang R."/>
        </authorList>
    </citation>
    <scope>NUCLEOTIDE SEQUENCE [LARGE SCALE GENOMIC DNA]</scope>
    <source>
        <strain>91001 / Biovar Mediaevalis</strain>
    </source>
</reference>
<gene>
    <name evidence="1" type="primary">rodZ</name>
    <name type="ordered locus">YPO2880</name>
    <name type="ordered locus">y1352</name>
    <name type="ordered locus">YP_2746</name>
</gene>
<protein>
    <recommendedName>
        <fullName evidence="1">Cytoskeleton protein RodZ</fullName>
    </recommendedName>
</protein>
<comment type="function">
    <text evidence="1">Cytoskeletal protein that is involved in cell-shape control through regulation of the length of the long axis.</text>
</comment>
<comment type="subcellular location">
    <subcellularLocation>
        <location evidence="1">Cell inner membrane</location>
        <topology evidence="1">Single-pass type II membrane protein</topology>
    </subcellularLocation>
    <text evidence="1">Forms helical filaments along the long axis of the cell.</text>
</comment>
<comment type="domain">
    <text evidence="1">The helix-turn-helix (HTH) motif in the cytoplasmic domain of the N-terminus is involved in the formation of spirals to maintain the rigid rod shape. As this protein is anchored in the cytoplasmic membrane, the HTH motif may contribute to protein-protein interactions to form the RodZ helix, which is localized beneath the cytoplasmic membrane. The C-terminal domain may be critical for determination of the rod shape by probably interacting with enzymes required for synthesis of the peptidoglycan layer, including PBPs in the periplasm.</text>
</comment>
<comment type="similarity">
    <text evidence="1">Belongs to the RodZ family.</text>
</comment>
<proteinExistence type="inferred from homology"/>
<evidence type="ECO:0000255" key="1">
    <source>
        <dbReference type="HAMAP-Rule" id="MF_02017"/>
    </source>
</evidence>
<evidence type="ECO:0000256" key="2">
    <source>
        <dbReference type="SAM" id="MobiDB-lite"/>
    </source>
</evidence>
<keyword id="KW-0997">Cell inner membrane</keyword>
<keyword id="KW-1003">Cell membrane</keyword>
<keyword id="KW-0133">Cell shape</keyword>
<keyword id="KW-0238">DNA-binding</keyword>
<keyword id="KW-0472">Membrane</keyword>
<keyword id="KW-1185">Reference proteome</keyword>
<keyword id="KW-0735">Signal-anchor</keyword>
<keyword id="KW-0812">Transmembrane</keyword>
<keyword id="KW-1133">Transmembrane helix</keyword>
<dbReference type="EMBL" id="AL590842">
    <property type="protein sequence ID" value="CAL21491.1"/>
    <property type="molecule type" value="Genomic_DNA"/>
</dbReference>
<dbReference type="EMBL" id="AE009952">
    <property type="protein sequence ID" value="AAM84925.1"/>
    <property type="molecule type" value="Genomic_DNA"/>
</dbReference>
<dbReference type="EMBL" id="AE017042">
    <property type="protein sequence ID" value="AAS62934.1"/>
    <property type="molecule type" value="Genomic_DNA"/>
</dbReference>
<dbReference type="PIR" id="AH0350">
    <property type="entry name" value="AH0350"/>
</dbReference>
<dbReference type="RefSeq" id="WP_002209818.1">
    <property type="nucleotide sequence ID" value="NZ_WUCM01000067.1"/>
</dbReference>
<dbReference type="RefSeq" id="YP_002347815.1">
    <property type="nucleotide sequence ID" value="NC_003143.1"/>
</dbReference>
<dbReference type="SMR" id="Q7CJM7"/>
<dbReference type="STRING" id="214092.YPO2880"/>
<dbReference type="PaxDb" id="214092-YPO2880"/>
<dbReference type="DNASU" id="1146299"/>
<dbReference type="EnsemblBacteria" id="AAS62934">
    <property type="protein sequence ID" value="AAS62934"/>
    <property type="gene ID" value="YP_2746"/>
</dbReference>
<dbReference type="GeneID" id="57975838"/>
<dbReference type="KEGG" id="ype:YPO2880"/>
<dbReference type="KEGG" id="ypk:y1352"/>
<dbReference type="KEGG" id="ypm:YP_2746"/>
<dbReference type="PATRIC" id="fig|214092.21.peg.3326"/>
<dbReference type="eggNOG" id="COG1426">
    <property type="taxonomic scope" value="Bacteria"/>
</dbReference>
<dbReference type="eggNOG" id="COG3266">
    <property type="taxonomic scope" value="Bacteria"/>
</dbReference>
<dbReference type="HOGENOM" id="CLU_047530_3_1_6"/>
<dbReference type="OMA" id="ADCWTQV"/>
<dbReference type="OrthoDB" id="9790252at2"/>
<dbReference type="Proteomes" id="UP000000815">
    <property type="component" value="Chromosome"/>
</dbReference>
<dbReference type="Proteomes" id="UP000001019">
    <property type="component" value="Chromosome"/>
</dbReference>
<dbReference type="Proteomes" id="UP000002490">
    <property type="component" value="Chromosome"/>
</dbReference>
<dbReference type="GO" id="GO:0005886">
    <property type="term" value="C:plasma membrane"/>
    <property type="evidence" value="ECO:0000318"/>
    <property type="project" value="GO_Central"/>
</dbReference>
<dbReference type="GO" id="GO:0003677">
    <property type="term" value="F:DNA binding"/>
    <property type="evidence" value="ECO:0007669"/>
    <property type="project" value="UniProtKB-KW"/>
</dbReference>
<dbReference type="GO" id="GO:0008360">
    <property type="term" value="P:regulation of cell shape"/>
    <property type="evidence" value="ECO:0007669"/>
    <property type="project" value="UniProtKB-UniRule"/>
</dbReference>
<dbReference type="CDD" id="cd00093">
    <property type="entry name" value="HTH_XRE"/>
    <property type="match status" value="1"/>
</dbReference>
<dbReference type="Gene3D" id="1.10.260.40">
    <property type="entry name" value="lambda repressor-like DNA-binding domains"/>
    <property type="match status" value="1"/>
</dbReference>
<dbReference type="HAMAP" id="MF_02017">
    <property type="entry name" value="RodZ"/>
    <property type="match status" value="1"/>
</dbReference>
<dbReference type="InterPro" id="IPR050400">
    <property type="entry name" value="Bact_Cytoskel_RodZ"/>
</dbReference>
<dbReference type="InterPro" id="IPR001387">
    <property type="entry name" value="Cro/C1-type_HTH"/>
</dbReference>
<dbReference type="InterPro" id="IPR010982">
    <property type="entry name" value="Lambda_DNA-bd_dom_sf"/>
</dbReference>
<dbReference type="InterPro" id="IPR023690">
    <property type="entry name" value="RodZ"/>
</dbReference>
<dbReference type="InterPro" id="IPR025194">
    <property type="entry name" value="RodZ-like_C"/>
</dbReference>
<dbReference type="NCBIfam" id="NF008109">
    <property type="entry name" value="PRK10856.1"/>
    <property type="match status" value="1"/>
</dbReference>
<dbReference type="PANTHER" id="PTHR34475">
    <property type="match status" value="1"/>
</dbReference>
<dbReference type="PANTHER" id="PTHR34475:SF1">
    <property type="entry name" value="CYTOSKELETON PROTEIN RODZ"/>
    <property type="match status" value="1"/>
</dbReference>
<dbReference type="Pfam" id="PF13413">
    <property type="entry name" value="HTH_25"/>
    <property type="match status" value="1"/>
</dbReference>
<dbReference type="Pfam" id="PF13464">
    <property type="entry name" value="RodZ_C"/>
    <property type="match status" value="1"/>
</dbReference>
<dbReference type="SMART" id="SM00530">
    <property type="entry name" value="HTH_XRE"/>
    <property type="match status" value="1"/>
</dbReference>
<dbReference type="SUPFAM" id="SSF47413">
    <property type="entry name" value="lambda repressor-like DNA-binding domains"/>
    <property type="match status" value="1"/>
</dbReference>
<dbReference type="PROSITE" id="PS50943">
    <property type="entry name" value="HTH_CROC1"/>
    <property type="match status" value="1"/>
</dbReference>
<feature type="chain" id="PRO_0000361869" description="Cytoskeleton protein RodZ">
    <location>
        <begin position="1"/>
        <end position="345"/>
    </location>
</feature>
<feature type="topological domain" description="Cytoplasmic" evidence="1">
    <location>
        <begin position="1"/>
        <end position="111"/>
    </location>
</feature>
<feature type="transmembrane region" description="Helical; Signal-anchor for type II membrane protein" evidence="1">
    <location>
        <begin position="112"/>
        <end position="132"/>
    </location>
</feature>
<feature type="topological domain" description="Periplasmic" evidence="1">
    <location>
        <begin position="133"/>
        <end position="345"/>
    </location>
</feature>
<feature type="domain" description="HTH cro/C1-type" evidence="1">
    <location>
        <begin position="19"/>
        <end position="79"/>
    </location>
</feature>
<feature type="DNA-binding region" description="H-T-H motif" evidence="1">
    <location>
        <begin position="30"/>
        <end position="49"/>
    </location>
</feature>
<feature type="region of interest" description="Disordered" evidence="2">
    <location>
        <begin position="151"/>
        <end position="259"/>
    </location>
</feature>
<feature type="compositionally biased region" description="Polar residues" evidence="2">
    <location>
        <begin position="188"/>
        <end position="225"/>
    </location>
</feature>
<feature type="compositionally biased region" description="Low complexity" evidence="2">
    <location>
        <begin position="229"/>
        <end position="241"/>
    </location>
</feature>
<organism>
    <name type="scientific">Yersinia pestis</name>
    <dbReference type="NCBI Taxonomy" id="632"/>
    <lineage>
        <taxon>Bacteria</taxon>
        <taxon>Pseudomonadati</taxon>
        <taxon>Pseudomonadota</taxon>
        <taxon>Gammaproteobacteria</taxon>
        <taxon>Enterobacterales</taxon>
        <taxon>Yersiniaceae</taxon>
        <taxon>Yersinia</taxon>
    </lineage>
</organism>
<sequence>MNTEASQDQTVTETPGVRLRQARESLGLTQQTVAERLCLKVSTIRDIEEDNAQANLASTFHRGYIRSYAKLVHLPEDELLPILEKQAPVRAAKVAPMQSFSLGKKHKKRDGWLMSFTWLIVLVVLGLTGAWWWQNHQAQQAEIANMVDQSSAQLSQNGGQPVPLTDDNSDAIAPTDAPAPVANGQPVPLTNHSGSAITNSATTSSVPKTTSTEPVDTANTNTTMHQEGAASAAVSPSQVPQPGMPTGQPPLPTADAGVSGSASSVGALVMNFTADCWLQVVDATGKTLFSGIQKGGAVLNLAGKAPYKLTIGAPGALTISYQGNPVDLSKFIKANRVARLTVCVE</sequence>
<accession>Q7CJM7</accession>
<accession>Q74S83</accession>